<gene>
    <name evidence="7" type="primary">penC</name>
</gene>
<evidence type="ECO:0000250" key="1">
    <source>
        <dbReference type="UniProtKB" id="C8VJQ3"/>
    </source>
</evidence>
<evidence type="ECO:0000250" key="2">
    <source>
        <dbReference type="UniProtKB" id="Q5AR53"/>
    </source>
</evidence>
<evidence type="ECO:0000250" key="3">
    <source>
        <dbReference type="UniProtKB" id="Q5AR54"/>
    </source>
</evidence>
<evidence type="ECO:0000255" key="4">
    <source>
        <dbReference type="PROSITE-ProRule" id="PRU01020"/>
    </source>
</evidence>
<evidence type="ECO:0000269" key="5">
    <source>
    </source>
</evidence>
<evidence type="ECO:0000269" key="6">
    <source>
    </source>
</evidence>
<evidence type="ECO:0000303" key="7">
    <source>
    </source>
</evidence>
<evidence type="ECO:0000305" key="8"/>
<evidence type="ECO:0000305" key="9">
    <source>
    </source>
</evidence>
<comment type="function">
    <text evidence="1 2 3 5 6 9">O-methyltransferase; part of the gene cluster that mediates the biosynthesis of penigequinolones, potent insecticidal alkaloids that contain a highly modified 10-carbon prenyl group (PubMed:25859931). The first stage is catalyzed by the nonribosomal peptide synthetase penN that condenses anthranilic acid and O-methyl-L-tyrosine to produce 4'-methoxycyclopeptin (By similarity). 4'-methoxycyclopeptin is then converted to 4'-methoxydehydrocyclopeptin by the ketoglutarate-dependent dioxygenase penM through dehydrogenation to form a double bond between C-alpha and C-beta of the O-methyltyrosine side chain (By similarity). PenM also converts its first product methoxydehydrocyclopeptin to 4'-methoxycyclopenin (By similarity). The following conversion of 4'methoxycyclopenin into 4'-methoxyviridicatin is catalyzed by the cyclopenase penL (By similarity). 4'-methoxyviridicatin is the precursor of quinolone natural products, and is further converted to quinolinone B (Probable). The prenyltransferase penI then catalyzes the canonical Friedel-Crafts alkylation of quinolinone B with dimethylallyl cation to yield dimethylallyl quinolone, which is subjected to FAD-dependent dehydrogenation by the FAD-linked oxidoreductase penH to yield conjugated aryl diene (PubMed:25859931). The delta(3') double bond then serves as the site of the second alkylation with DMAPP catalyzed by the prenyltransferase penG to yield a carbenium ion intermediate, which can be attacked by H(2)O to yield a styrenyl quinolone containing a C3'-hydroxyprenyl chain, or undergo cyclization to yield yaequinolones J1 and J2 (PubMed:25859931). The conversion of the styrenyl quinolone into the tetrahydrofuran-containing yaequinolone C is performed by the FAD-dependent monooxygenase penE and involves epoxidation of the terminal C7'-C8' olefin, followed by epoxide ring opening initiated by the C3' hydroxyl group (PubMed:25859931). The predicted cysteine hydrolase penJ acts as an epoxide hydrolase that enhances the rate of the 5-exo-tet cyclization step, increasing the yield of yaequinolone C (PubMed:25859931, PubMed:28114276). PenF catalyzes the cationic rearrangement of the epoxide formed by penE (before ring opening to produce yaequinolone C) into yaequinolone D (PubMed:28114276). Finally, the short-chain dehydrogenase/reductase (SDR)-like reductase penD, catalyzes both the dehydration of yaequinolone D and the reduction of the resulting oxonium to yield penigequinolone (PubMed:28114276).</text>
</comment>
<comment type="pathway">
    <text evidence="9">Secondary metabolite biosynthesis.</text>
</comment>
<comment type="pathway">
    <text evidence="9">Alkaloid biosynthesis.</text>
</comment>
<comment type="pathway">
    <text evidence="9">Mycotoxin biosynthesis.</text>
</comment>
<comment type="similarity">
    <text evidence="8">Belongs to the class I-like SAM-binding methyltransferase superfamily. Cation-independent O-methyltransferase family.</text>
</comment>
<keyword id="KW-0489">Methyltransferase</keyword>
<keyword id="KW-0949">S-adenosyl-L-methionine</keyword>
<keyword id="KW-0808">Transferase</keyword>
<organism>
    <name type="scientific">Penicillium thymicola</name>
    <dbReference type="NCBI Taxonomy" id="293382"/>
    <lineage>
        <taxon>Eukaryota</taxon>
        <taxon>Fungi</taxon>
        <taxon>Dikarya</taxon>
        <taxon>Ascomycota</taxon>
        <taxon>Pezizomycotina</taxon>
        <taxon>Eurotiomycetes</taxon>
        <taxon>Eurotiomycetidae</taxon>
        <taxon>Eurotiales</taxon>
        <taxon>Aspergillaceae</taxon>
        <taxon>Penicillium</taxon>
    </lineage>
</organism>
<protein>
    <recommendedName>
        <fullName evidence="7">O-methyltransferase penC</fullName>
        <ecNumber evidence="4">2.1.1.-</ecNumber>
    </recommendedName>
    <alternativeName>
        <fullName evidence="7">Penigequinolones biosynthesis cluster protein A</fullName>
    </alternativeName>
</protein>
<feature type="chain" id="PRO_0000455356" description="O-methyltransferase penC">
    <location>
        <begin position="1"/>
        <end position="398"/>
    </location>
</feature>
<feature type="active site" description="Proton acceptor" evidence="4">
    <location>
        <position position="305"/>
    </location>
</feature>
<feature type="binding site" evidence="4">
    <location>
        <position position="263"/>
    </location>
    <ligand>
        <name>S-adenosyl-L-methionine</name>
        <dbReference type="ChEBI" id="CHEBI:59789"/>
    </ligand>
</feature>
<name>PENC_PENTH</name>
<reference key="1">
    <citation type="journal article" date="2015" name="J. Am. Chem. Soc.">
        <title>Tandem prenyltransferases catalyze isoprenoid elongation and complexity generation in biosynthesis of quinolone alkaloids.</title>
        <authorList>
            <person name="Zou Y."/>
            <person name="Zhan Z."/>
            <person name="Li D."/>
            <person name="Tang M."/>
            <person name="Cacho R.A."/>
            <person name="Watanabe K."/>
            <person name="Tang Y."/>
        </authorList>
    </citation>
    <scope>NUCLEOTIDE SEQUENCE [GENOMIC DNA]</scope>
    <scope>FUNCTION</scope>
    <scope>PATHWAY</scope>
    <source>
        <strain>IBT 5891 / CBS 111225</strain>
    </source>
</reference>
<reference key="2">
    <citation type="journal article" date="2017" name="Nat. Chem. Biol.">
        <title>Enzyme-catalyzed cationic epoxide rearrangements in quinolone alkaloid biosynthesis.</title>
        <authorList>
            <person name="Zou Y."/>
            <person name="Garcia-Borras M."/>
            <person name="Tang M.C."/>
            <person name="Hirayama Y."/>
            <person name="Li D.H."/>
            <person name="Li L."/>
            <person name="Watanabe K."/>
            <person name="Houk K.N."/>
            <person name="Tang Y."/>
        </authorList>
    </citation>
    <scope>FUNCTION</scope>
</reference>
<sequence>MTVGSQVVHDEPTILIAKLHALEPRLKDKNDHQARKECLRISKALTSQVEEPDNVAVSLAFSPVIALSARVAIDLNLFALVVQHGPVASASLAALSGAEELLIIRIMRLMSTAHLVEETAARTWSATRITKAMAREEIAAGHRFNSQVVVPAIQSAPDFFRENGYSCPTDTRKGLVQYALKTEQTAFDYIISNPSMLKDFNLFMGNAMGARKFWLDWFPVQSKILDGADPEKALIVDVGGGRGHDLIAFHKQFPNAGRLVVEDLPAVLEPLGEFSAFIEQVEHDFLSGEQPVKGARAYLCHHIMHDWPDSYCLRILEGIALAMTPGYSKLLLHEIIVPEQGACDFQAQSDITAMVCNGGMERTKQQFHTLLKAAGLSVVQIWESADEGGDGIVEAMKV</sequence>
<dbReference type="EC" id="2.1.1.-" evidence="4"/>
<dbReference type="EMBL" id="KX528209">
    <property type="protein sequence ID" value="ANY57881.1"/>
    <property type="molecule type" value="Genomic_DNA"/>
</dbReference>
<dbReference type="SMR" id="A0A1B2CTA7"/>
<dbReference type="GO" id="GO:0008171">
    <property type="term" value="F:O-methyltransferase activity"/>
    <property type="evidence" value="ECO:0007669"/>
    <property type="project" value="InterPro"/>
</dbReference>
<dbReference type="GO" id="GO:0032259">
    <property type="term" value="P:methylation"/>
    <property type="evidence" value="ECO:0007669"/>
    <property type="project" value="UniProtKB-KW"/>
</dbReference>
<dbReference type="GO" id="GO:0044550">
    <property type="term" value="P:secondary metabolite biosynthetic process"/>
    <property type="evidence" value="ECO:0007669"/>
    <property type="project" value="UniProtKB-ARBA"/>
</dbReference>
<dbReference type="Gene3D" id="3.40.50.150">
    <property type="entry name" value="Vaccinia Virus protein VP39"/>
    <property type="match status" value="1"/>
</dbReference>
<dbReference type="Gene3D" id="1.10.10.10">
    <property type="entry name" value="Winged helix-like DNA-binding domain superfamily/Winged helix DNA-binding domain"/>
    <property type="match status" value="1"/>
</dbReference>
<dbReference type="InterPro" id="IPR016461">
    <property type="entry name" value="COMT-like"/>
</dbReference>
<dbReference type="InterPro" id="IPR001077">
    <property type="entry name" value="O_MeTrfase_dom"/>
</dbReference>
<dbReference type="InterPro" id="IPR029063">
    <property type="entry name" value="SAM-dependent_MTases_sf"/>
</dbReference>
<dbReference type="InterPro" id="IPR036388">
    <property type="entry name" value="WH-like_DNA-bd_sf"/>
</dbReference>
<dbReference type="InterPro" id="IPR036390">
    <property type="entry name" value="WH_DNA-bd_sf"/>
</dbReference>
<dbReference type="PANTHER" id="PTHR43712:SF1">
    <property type="entry name" value="HYPOTHETICAL O-METHYLTRANSFERASE (EUROFUNG)-RELATED"/>
    <property type="match status" value="1"/>
</dbReference>
<dbReference type="PANTHER" id="PTHR43712">
    <property type="entry name" value="PUTATIVE (AFU_ORTHOLOGUE AFUA_4G14580)-RELATED"/>
    <property type="match status" value="1"/>
</dbReference>
<dbReference type="Pfam" id="PF00891">
    <property type="entry name" value="Methyltransf_2"/>
    <property type="match status" value="1"/>
</dbReference>
<dbReference type="PIRSF" id="PIRSF005739">
    <property type="entry name" value="O-mtase"/>
    <property type="match status" value="1"/>
</dbReference>
<dbReference type="SUPFAM" id="SSF53335">
    <property type="entry name" value="S-adenosyl-L-methionine-dependent methyltransferases"/>
    <property type="match status" value="1"/>
</dbReference>
<dbReference type="SUPFAM" id="SSF46785">
    <property type="entry name" value="Winged helix' DNA-binding domain"/>
    <property type="match status" value="1"/>
</dbReference>
<dbReference type="PROSITE" id="PS51683">
    <property type="entry name" value="SAM_OMT_II"/>
    <property type="match status" value="1"/>
</dbReference>
<proteinExistence type="inferred from homology"/>
<accession>A0A1B2CTA7</accession>